<protein>
    <recommendedName>
        <fullName evidence="1">Large-conductance mechanosensitive channel</fullName>
    </recommendedName>
</protein>
<proteinExistence type="inferred from homology"/>
<feature type="chain" id="PRO_1000015374" description="Large-conductance mechanosensitive channel">
    <location>
        <begin position="1"/>
        <end position="141"/>
    </location>
</feature>
<feature type="transmembrane region" description="Helical" evidence="1">
    <location>
        <begin position="16"/>
        <end position="36"/>
    </location>
</feature>
<feature type="transmembrane region" description="Helical" evidence="1">
    <location>
        <begin position="83"/>
        <end position="103"/>
    </location>
</feature>
<reference key="1">
    <citation type="journal article" date="2007" name="Appl. Environ. Microbiol.">
        <title>Genome sequence of the cellulolytic gliding bacterium Cytophaga hutchinsonii.</title>
        <authorList>
            <person name="Xie G."/>
            <person name="Bruce D.C."/>
            <person name="Challacombe J.F."/>
            <person name="Chertkov O."/>
            <person name="Detter J.C."/>
            <person name="Gilna P."/>
            <person name="Han C.S."/>
            <person name="Lucas S."/>
            <person name="Misra M."/>
            <person name="Myers G.L."/>
            <person name="Richardson P."/>
            <person name="Tapia R."/>
            <person name="Thayer N."/>
            <person name="Thompson L.S."/>
            <person name="Brettin T.S."/>
            <person name="Henrissat B."/>
            <person name="Wilson D.B."/>
            <person name="McBride M.J."/>
        </authorList>
    </citation>
    <scope>NUCLEOTIDE SEQUENCE [LARGE SCALE GENOMIC DNA]</scope>
    <source>
        <strain>ATCC 33406 / DSM 1761 / JCM 20678 / CIP 103989 / IAM 12607 / NBRC 15051 / NCIMB 9469 / D465</strain>
    </source>
</reference>
<gene>
    <name evidence="1" type="primary">mscL</name>
    <name type="ordered locus">CHU_1961</name>
</gene>
<organism>
    <name type="scientific">Cytophaga hutchinsonii (strain ATCC 33406 / DSM 1761 / CIP 103989 / NBRC 15051 / NCIMB 9469 / D465)</name>
    <dbReference type="NCBI Taxonomy" id="269798"/>
    <lineage>
        <taxon>Bacteria</taxon>
        <taxon>Pseudomonadati</taxon>
        <taxon>Bacteroidota</taxon>
        <taxon>Cytophagia</taxon>
        <taxon>Cytophagales</taxon>
        <taxon>Cytophagaceae</taxon>
        <taxon>Cytophaga</taxon>
    </lineage>
</organism>
<sequence>MSFIGEFKAFAMRGNVVDLAVGVIIGGAFGKIVSSMVDDLIMPIVSIFMGDKGFKDKFFVFGNQTFESLAKAKEAGVPVFAYGNFIQTVIDFTILAFVIFLMVKGMNNLKKKEEAAAPAPVPAEPTKEEQLLTEIRDLLKK</sequence>
<keyword id="KW-0997">Cell inner membrane</keyword>
<keyword id="KW-1003">Cell membrane</keyword>
<keyword id="KW-0407">Ion channel</keyword>
<keyword id="KW-0406">Ion transport</keyword>
<keyword id="KW-0472">Membrane</keyword>
<keyword id="KW-1185">Reference proteome</keyword>
<keyword id="KW-0812">Transmembrane</keyword>
<keyword id="KW-1133">Transmembrane helix</keyword>
<keyword id="KW-0813">Transport</keyword>
<comment type="function">
    <text evidence="1">Channel that opens in response to stretch forces in the membrane lipid bilayer. May participate in the regulation of osmotic pressure changes within the cell.</text>
</comment>
<comment type="subunit">
    <text evidence="1">Homopentamer.</text>
</comment>
<comment type="subcellular location">
    <subcellularLocation>
        <location evidence="1">Cell inner membrane</location>
        <topology evidence="1">Multi-pass membrane protein</topology>
    </subcellularLocation>
</comment>
<comment type="similarity">
    <text evidence="1">Belongs to the MscL family.</text>
</comment>
<accession>Q11TN7</accession>
<dbReference type="EMBL" id="CP000383">
    <property type="protein sequence ID" value="ABG59227.1"/>
    <property type="molecule type" value="Genomic_DNA"/>
</dbReference>
<dbReference type="RefSeq" id="WP_011585344.1">
    <property type="nucleotide sequence ID" value="NC_008255.1"/>
</dbReference>
<dbReference type="SMR" id="Q11TN7"/>
<dbReference type="STRING" id="269798.CHU_1961"/>
<dbReference type="KEGG" id="chu:CHU_1961"/>
<dbReference type="eggNOG" id="COG1970">
    <property type="taxonomic scope" value="Bacteria"/>
</dbReference>
<dbReference type="HOGENOM" id="CLU_095787_0_0_10"/>
<dbReference type="OrthoDB" id="9810350at2"/>
<dbReference type="Proteomes" id="UP000001822">
    <property type="component" value="Chromosome"/>
</dbReference>
<dbReference type="GO" id="GO:0005886">
    <property type="term" value="C:plasma membrane"/>
    <property type="evidence" value="ECO:0007669"/>
    <property type="project" value="UniProtKB-SubCell"/>
</dbReference>
<dbReference type="GO" id="GO:0008381">
    <property type="term" value="F:mechanosensitive monoatomic ion channel activity"/>
    <property type="evidence" value="ECO:0007669"/>
    <property type="project" value="UniProtKB-UniRule"/>
</dbReference>
<dbReference type="Gene3D" id="1.10.1200.120">
    <property type="entry name" value="Large-conductance mechanosensitive channel, MscL, domain 1"/>
    <property type="match status" value="1"/>
</dbReference>
<dbReference type="HAMAP" id="MF_00115">
    <property type="entry name" value="MscL"/>
    <property type="match status" value="1"/>
</dbReference>
<dbReference type="InterPro" id="IPR019823">
    <property type="entry name" value="Mechanosensitive_channel_CS"/>
</dbReference>
<dbReference type="InterPro" id="IPR001185">
    <property type="entry name" value="MS_channel"/>
</dbReference>
<dbReference type="InterPro" id="IPR037673">
    <property type="entry name" value="MSC/AndL"/>
</dbReference>
<dbReference type="InterPro" id="IPR036019">
    <property type="entry name" value="MscL_channel"/>
</dbReference>
<dbReference type="NCBIfam" id="TIGR00220">
    <property type="entry name" value="mscL"/>
    <property type="match status" value="1"/>
</dbReference>
<dbReference type="NCBIfam" id="NF001843">
    <property type="entry name" value="PRK00567.1-4"/>
    <property type="match status" value="1"/>
</dbReference>
<dbReference type="NCBIfam" id="NF010557">
    <property type="entry name" value="PRK13952.1"/>
    <property type="match status" value="1"/>
</dbReference>
<dbReference type="PANTHER" id="PTHR30266:SF2">
    <property type="entry name" value="LARGE-CONDUCTANCE MECHANOSENSITIVE CHANNEL"/>
    <property type="match status" value="1"/>
</dbReference>
<dbReference type="PANTHER" id="PTHR30266">
    <property type="entry name" value="MECHANOSENSITIVE CHANNEL MSCL"/>
    <property type="match status" value="1"/>
</dbReference>
<dbReference type="Pfam" id="PF01741">
    <property type="entry name" value="MscL"/>
    <property type="match status" value="1"/>
</dbReference>
<dbReference type="PRINTS" id="PR01264">
    <property type="entry name" value="MECHCHANNEL"/>
</dbReference>
<dbReference type="SUPFAM" id="SSF81330">
    <property type="entry name" value="Gated mechanosensitive channel"/>
    <property type="match status" value="1"/>
</dbReference>
<dbReference type="PROSITE" id="PS01327">
    <property type="entry name" value="MSCL"/>
    <property type="match status" value="1"/>
</dbReference>
<name>MSCL_CYTH3</name>
<evidence type="ECO:0000255" key="1">
    <source>
        <dbReference type="HAMAP-Rule" id="MF_00115"/>
    </source>
</evidence>